<organism>
    <name type="scientific">Escherichia coli (strain SE11)</name>
    <dbReference type="NCBI Taxonomy" id="409438"/>
    <lineage>
        <taxon>Bacteria</taxon>
        <taxon>Pseudomonadati</taxon>
        <taxon>Pseudomonadota</taxon>
        <taxon>Gammaproteobacteria</taxon>
        <taxon>Enterobacterales</taxon>
        <taxon>Enterobacteriaceae</taxon>
        <taxon>Escherichia</taxon>
    </lineage>
</organism>
<dbReference type="EC" id="3.1.-.-" evidence="1"/>
<dbReference type="EMBL" id="AP009240">
    <property type="protein sequence ID" value="BAG78741.1"/>
    <property type="molecule type" value="Genomic_DNA"/>
</dbReference>
<dbReference type="SMR" id="B6I787"/>
<dbReference type="KEGG" id="ecy:ECSE_3217"/>
<dbReference type="HOGENOM" id="CLU_098240_3_0_6"/>
<dbReference type="Proteomes" id="UP000008199">
    <property type="component" value="Chromosome"/>
</dbReference>
<dbReference type="GO" id="GO:0005829">
    <property type="term" value="C:cytosol"/>
    <property type="evidence" value="ECO:0007669"/>
    <property type="project" value="TreeGrafter"/>
</dbReference>
<dbReference type="GO" id="GO:0004518">
    <property type="term" value="F:nuclease activity"/>
    <property type="evidence" value="ECO:0007669"/>
    <property type="project" value="UniProtKB-KW"/>
</dbReference>
<dbReference type="GO" id="GO:0000967">
    <property type="term" value="P:rRNA 5'-end processing"/>
    <property type="evidence" value="ECO:0007669"/>
    <property type="project" value="UniProtKB-UniRule"/>
</dbReference>
<dbReference type="CDD" id="cd16964">
    <property type="entry name" value="YqgF"/>
    <property type="match status" value="1"/>
</dbReference>
<dbReference type="FunFam" id="3.30.420.140:FF:000002">
    <property type="entry name" value="Putative pre-16S rRNA nuclease"/>
    <property type="match status" value="1"/>
</dbReference>
<dbReference type="Gene3D" id="3.30.420.140">
    <property type="entry name" value="YqgF/RNase H-like domain"/>
    <property type="match status" value="1"/>
</dbReference>
<dbReference type="HAMAP" id="MF_00651">
    <property type="entry name" value="Nuclease_YqgF"/>
    <property type="match status" value="1"/>
</dbReference>
<dbReference type="InterPro" id="IPR012337">
    <property type="entry name" value="RNaseH-like_sf"/>
</dbReference>
<dbReference type="InterPro" id="IPR005227">
    <property type="entry name" value="YqgF"/>
</dbReference>
<dbReference type="InterPro" id="IPR006641">
    <property type="entry name" value="YqgF/RNaseH-like_dom"/>
</dbReference>
<dbReference type="InterPro" id="IPR037027">
    <property type="entry name" value="YqgF/RNaseH-like_dom_sf"/>
</dbReference>
<dbReference type="NCBIfam" id="TIGR00250">
    <property type="entry name" value="RNAse_H_YqgF"/>
    <property type="match status" value="1"/>
</dbReference>
<dbReference type="PANTHER" id="PTHR33317">
    <property type="entry name" value="POLYNUCLEOTIDYL TRANSFERASE, RIBONUCLEASE H-LIKE SUPERFAMILY PROTEIN"/>
    <property type="match status" value="1"/>
</dbReference>
<dbReference type="PANTHER" id="PTHR33317:SF4">
    <property type="entry name" value="POLYNUCLEOTIDYL TRANSFERASE, RIBONUCLEASE H-LIKE SUPERFAMILY PROTEIN"/>
    <property type="match status" value="1"/>
</dbReference>
<dbReference type="Pfam" id="PF03652">
    <property type="entry name" value="RuvX"/>
    <property type="match status" value="1"/>
</dbReference>
<dbReference type="SMART" id="SM00732">
    <property type="entry name" value="YqgFc"/>
    <property type="match status" value="1"/>
</dbReference>
<dbReference type="SUPFAM" id="SSF53098">
    <property type="entry name" value="Ribonuclease H-like"/>
    <property type="match status" value="1"/>
</dbReference>
<accession>B6I787</accession>
<protein>
    <recommendedName>
        <fullName evidence="1">Putative pre-16S rRNA nuclease</fullName>
        <ecNumber evidence="1">3.1.-.-</ecNumber>
    </recommendedName>
</protein>
<evidence type="ECO:0000255" key="1">
    <source>
        <dbReference type="HAMAP-Rule" id="MF_00651"/>
    </source>
</evidence>
<proteinExistence type="inferred from homology"/>
<name>YQGF_ECOSE</name>
<reference key="1">
    <citation type="journal article" date="2008" name="DNA Res.">
        <title>Complete genome sequence and comparative analysis of the wild-type commensal Escherichia coli strain SE11 isolated from a healthy adult.</title>
        <authorList>
            <person name="Oshima K."/>
            <person name="Toh H."/>
            <person name="Ogura Y."/>
            <person name="Sasamoto H."/>
            <person name="Morita H."/>
            <person name="Park S.-H."/>
            <person name="Ooka T."/>
            <person name="Iyoda S."/>
            <person name="Taylor T.D."/>
            <person name="Hayashi T."/>
            <person name="Itoh K."/>
            <person name="Hattori M."/>
        </authorList>
    </citation>
    <scope>NUCLEOTIDE SEQUENCE [LARGE SCALE GENOMIC DNA]</scope>
    <source>
        <strain>SE11</strain>
    </source>
</reference>
<comment type="function">
    <text evidence="1">Could be a nuclease involved in processing of the 5'-end of pre-16S rRNA.</text>
</comment>
<comment type="subcellular location">
    <subcellularLocation>
        <location evidence="1">Cytoplasm</location>
    </subcellularLocation>
</comment>
<comment type="similarity">
    <text evidence="1">Belongs to the YqgF nuclease family.</text>
</comment>
<sequence>MSGTLLAFDFGTKSIGVAVGQRITGTARPLPAIKAQDGTPDWNIIERLLKEWQPDEIIVGLPLNMDGTEQPLTARARKFANRIHGRFGVDVKLHDERLSTVEARSGLFEQGGYRALNKGKVDSASAVIILESYFEQGY</sequence>
<gene>
    <name evidence="1" type="primary">yqgF</name>
    <name type="ordered locus">ECSE_3217</name>
</gene>
<keyword id="KW-0963">Cytoplasm</keyword>
<keyword id="KW-0378">Hydrolase</keyword>
<keyword id="KW-0540">Nuclease</keyword>
<keyword id="KW-0690">Ribosome biogenesis</keyword>
<feature type="chain" id="PRO_1000131033" description="Putative pre-16S rRNA nuclease">
    <location>
        <begin position="1"/>
        <end position="138"/>
    </location>
</feature>